<reference key="1">
    <citation type="journal article" date="1988" name="J. Mol. Biol.">
        <title>Anaerobically regulated aldolase gene of maize. A chimaeric origin?</title>
        <authorList>
            <person name="Dennis E.S."/>
            <person name="Gerlach W.L."/>
            <person name="Walker J.C."/>
            <person name="Lavin M."/>
            <person name="Peacock W.J."/>
        </authorList>
    </citation>
    <scope>NUCLEOTIDE SEQUENCE</scope>
</reference>
<reference key="2">
    <citation type="journal article" date="1986" name="Plant Physiol.">
        <title>The complete amino acid sequence for the anaerobically induced aldolase from maize derived from cDNA clones.</title>
        <authorList>
            <person name="Kelley P.M."/>
            <person name="Tolan D.R."/>
        </authorList>
    </citation>
    <scope>NUCLEOTIDE SEQUENCE</scope>
</reference>
<comment type="catalytic activity">
    <reaction>
        <text>beta-D-fructose 1,6-bisphosphate = D-glyceraldehyde 3-phosphate + dihydroxyacetone phosphate</text>
        <dbReference type="Rhea" id="RHEA:14729"/>
        <dbReference type="ChEBI" id="CHEBI:32966"/>
        <dbReference type="ChEBI" id="CHEBI:57642"/>
        <dbReference type="ChEBI" id="CHEBI:59776"/>
        <dbReference type="EC" id="4.1.2.13"/>
    </reaction>
</comment>
<comment type="pathway">
    <text>Carbohydrate degradation; glycolysis; D-glyceraldehyde 3-phosphate and glycerone phosphate from D-glucose: step 4/4.</text>
</comment>
<comment type="subcellular location">
    <subcellularLocation>
        <location>Cytoplasm</location>
    </subcellularLocation>
</comment>
<comment type="similarity">
    <text evidence="2">Belongs to the class I fructose-bisphosphate aldolase family.</text>
</comment>
<keyword id="KW-0963">Cytoplasm</keyword>
<keyword id="KW-0324">Glycolysis</keyword>
<keyword id="KW-0456">Lyase</keyword>
<keyword id="KW-1185">Reference proteome</keyword>
<keyword id="KW-0704">Schiff base</keyword>
<proteinExistence type="evidence at transcript level"/>
<protein>
    <recommendedName>
        <fullName>Fructose-bisphosphate aldolase, cytoplasmic isozyme</fullName>
        <ecNumber>4.1.2.13</ecNumber>
    </recommendedName>
</protein>
<name>ALF_MAIZE</name>
<accession>P08440</accession>
<sequence length="355" mass="38604">MSAYCGKYKDELIKNAAYIGTPGKGILAADESTGTIGKRLSSINVENVEENRRALRELLFCCPGALQYISGVILFEETLYQKTKDGKPFVDVLKEGGVLPGIKVDKGTIEVVGTDKETTTQGHDDLGKRCAKYYEAGARFAKWRAVLKIGPNEPSQLAIDLNAQGLARYAIICQENGLVPIVEPEILVDGPHDIDRCAYVTETVLAACYKALNEHHVLLEGTLLKPNMVTPGSDSKKVTPEVIAEYTVRTLQRTVPAAVPAVLFLSGGQSEEEATRNLNAMNKLSTKKPWSLSFSFGRALQASTLKAWAGKVENLEKARAAFLARCKANSEATLGTYKGDAAADTESLHVKDYKY</sequence>
<evidence type="ECO:0000250" key="1"/>
<evidence type="ECO:0000305" key="2"/>
<organism>
    <name type="scientific">Zea mays</name>
    <name type="common">Maize</name>
    <dbReference type="NCBI Taxonomy" id="4577"/>
    <lineage>
        <taxon>Eukaryota</taxon>
        <taxon>Viridiplantae</taxon>
        <taxon>Streptophyta</taxon>
        <taxon>Embryophyta</taxon>
        <taxon>Tracheophyta</taxon>
        <taxon>Spermatophyta</taxon>
        <taxon>Magnoliopsida</taxon>
        <taxon>Liliopsida</taxon>
        <taxon>Poales</taxon>
        <taxon>Poaceae</taxon>
        <taxon>PACMAD clade</taxon>
        <taxon>Panicoideae</taxon>
        <taxon>Andropogonodae</taxon>
        <taxon>Andropogoneae</taxon>
        <taxon>Tripsacinae</taxon>
        <taxon>Zea</taxon>
    </lineage>
</organism>
<feature type="chain" id="PRO_0000216921" description="Fructose-bisphosphate aldolase, cytoplasmic isozyme">
    <location>
        <begin position="1"/>
        <end position="355"/>
    </location>
</feature>
<feature type="active site" description="Proton acceptor" evidence="1">
    <location>
        <position position="183"/>
    </location>
</feature>
<feature type="active site" description="Schiff-base intermediate with dihydroxyacetone-P">
    <location>
        <position position="225"/>
    </location>
</feature>
<feature type="binding site">
    <location>
        <position position="52"/>
    </location>
    <ligand>
        <name>substrate</name>
    </ligand>
</feature>
<feature type="binding site">
    <location>
        <position position="142"/>
    </location>
    <ligand>
        <name>substrate</name>
    </ligand>
</feature>
<feature type="site" description="Necessary for preference for fructose 1,6-bisphosphate over fructose 1-phosphate">
    <location>
        <position position="355"/>
    </location>
</feature>
<dbReference type="EC" id="4.1.2.13"/>
<dbReference type="EMBL" id="X12872">
    <property type="protein sequence ID" value="CAA31366.1"/>
    <property type="molecule type" value="Genomic_DNA"/>
</dbReference>
<dbReference type="EMBL" id="M16220">
    <property type="protein sequence ID" value="AAA33435.1"/>
    <property type="molecule type" value="mRNA"/>
</dbReference>
<dbReference type="PIR" id="S07789">
    <property type="entry name" value="ADZM"/>
</dbReference>
<dbReference type="RefSeq" id="NP_001105336.1">
    <property type="nucleotide sequence ID" value="NM_001111866.1"/>
</dbReference>
<dbReference type="SMR" id="P08440"/>
<dbReference type="FunCoup" id="P08440">
    <property type="interactions" value="2398"/>
</dbReference>
<dbReference type="STRING" id="4577.P08440"/>
<dbReference type="PaxDb" id="4577-GRMZM2G057823_P01"/>
<dbReference type="ProMEX" id="P08440"/>
<dbReference type="GeneID" id="542261"/>
<dbReference type="KEGG" id="zma:542261"/>
<dbReference type="MaizeGDB" id="24903"/>
<dbReference type="eggNOG" id="KOG1557">
    <property type="taxonomic scope" value="Eukaryota"/>
</dbReference>
<dbReference type="InParanoid" id="P08440"/>
<dbReference type="OrthoDB" id="36455at2759"/>
<dbReference type="SABIO-RK" id="P08440"/>
<dbReference type="UniPathway" id="UPA00109">
    <property type="reaction ID" value="UER00183"/>
</dbReference>
<dbReference type="Proteomes" id="UP000007305">
    <property type="component" value="Unplaced"/>
</dbReference>
<dbReference type="ExpressionAtlas" id="P08440">
    <property type="expression patterns" value="baseline and differential"/>
</dbReference>
<dbReference type="GO" id="GO:0005829">
    <property type="term" value="C:cytosol"/>
    <property type="evidence" value="ECO:0000314"/>
    <property type="project" value="AgBase"/>
</dbReference>
<dbReference type="GO" id="GO:0004332">
    <property type="term" value="F:fructose-bisphosphate aldolase activity"/>
    <property type="evidence" value="ECO:0000314"/>
    <property type="project" value="AgBase"/>
</dbReference>
<dbReference type="GO" id="GO:0030388">
    <property type="term" value="P:fructose 1,6-bisphosphate metabolic process"/>
    <property type="evidence" value="ECO:0000318"/>
    <property type="project" value="GO_Central"/>
</dbReference>
<dbReference type="GO" id="GO:0006096">
    <property type="term" value="P:glycolytic process"/>
    <property type="evidence" value="ECO:0000318"/>
    <property type="project" value="GO_Central"/>
</dbReference>
<dbReference type="GO" id="GO:0034059">
    <property type="term" value="P:response to anoxia"/>
    <property type="evidence" value="ECO:0000314"/>
    <property type="project" value="AgBase"/>
</dbReference>
<dbReference type="GO" id="GO:0005986">
    <property type="term" value="P:sucrose biosynthetic process"/>
    <property type="evidence" value="ECO:0000304"/>
    <property type="project" value="AgBase"/>
</dbReference>
<dbReference type="CDD" id="cd00948">
    <property type="entry name" value="FBP_aldolase_I_a"/>
    <property type="match status" value="1"/>
</dbReference>
<dbReference type="FunFam" id="3.20.20.70:FF:000068">
    <property type="entry name" value="Fructose-bisphosphate aldolase"/>
    <property type="match status" value="1"/>
</dbReference>
<dbReference type="Gene3D" id="3.20.20.70">
    <property type="entry name" value="Aldolase class I"/>
    <property type="match status" value="1"/>
</dbReference>
<dbReference type="InterPro" id="IPR029768">
    <property type="entry name" value="Aldolase_I_AS"/>
</dbReference>
<dbReference type="InterPro" id="IPR013785">
    <property type="entry name" value="Aldolase_TIM"/>
</dbReference>
<dbReference type="InterPro" id="IPR000741">
    <property type="entry name" value="FBA_I"/>
</dbReference>
<dbReference type="NCBIfam" id="NF033379">
    <property type="entry name" value="FrucBisAld_I"/>
    <property type="match status" value="1"/>
</dbReference>
<dbReference type="PANTHER" id="PTHR11627">
    <property type="entry name" value="FRUCTOSE-BISPHOSPHATE ALDOLASE"/>
    <property type="match status" value="1"/>
</dbReference>
<dbReference type="Pfam" id="PF00274">
    <property type="entry name" value="Glycolytic"/>
    <property type="match status" value="1"/>
</dbReference>
<dbReference type="SUPFAM" id="SSF51569">
    <property type="entry name" value="Aldolase"/>
    <property type="match status" value="1"/>
</dbReference>
<dbReference type="PROSITE" id="PS00158">
    <property type="entry name" value="ALDOLASE_CLASS_I"/>
    <property type="match status" value="1"/>
</dbReference>